<evidence type="ECO:0000250" key="1">
    <source>
        <dbReference type="UniProtKB" id="Q96242"/>
    </source>
</evidence>
<evidence type="ECO:0000255" key="2"/>
<evidence type="ECO:0000269" key="3">
    <source>
    </source>
</evidence>
<evidence type="ECO:0000303" key="4">
    <source>
    </source>
</evidence>
<evidence type="ECO:0000305" key="5"/>
<reference key="1">
    <citation type="journal article" date="2023" name="J. Am. Chem. Soc.">
        <title>Post-cyclization skeletal rearrangements in plant triterpenoid biosynthesis by a pair of branchpoint isomerases.</title>
        <authorList>
            <person name="Chuang L."/>
            <person name="Liu S."/>
            <person name="Franke J."/>
        </authorList>
    </citation>
    <scope>NUCLEOTIDE SEQUENCE [MRNA]</scope>
    <scope>FUNCTION</scope>
    <scope>CATALYTIC ACTIVITY</scope>
    <scope>PATHWAY</scope>
</reference>
<accession>A0A9Y1LLN2</accession>
<organism>
    <name type="scientific">Ailanthus altissima</name>
    <name type="common">Tree-of-heaven</name>
    <name type="synonym">Toxicodendron altissimum</name>
    <dbReference type="NCBI Taxonomy" id="2768810"/>
    <lineage>
        <taxon>Eukaryota</taxon>
        <taxon>Viridiplantae</taxon>
        <taxon>Streptophyta</taxon>
        <taxon>Embryophyta</taxon>
        <taxon>Tracheophyta</taxon>
        <taxon>Spermatophyta</taxon>
        <taxon>Magnoliopsida</taxon>
        <taxon>eudicotyledons</taxon>
        <taxon>Gunneridae</taxon>
        <taxon>Pentapetalae</taxon>
        <taxon>rosids</taxon>
        <taxon>malvids</taxon>
        <taxon>Sapindales</taxon>
        <taxon>Simaroubaceae</taxon>
        <taxon>Ailanthus</taxon>
    </lineage>
</organism>
<protein>
    <recommendedName>
        <fullName evidence="4">7,8-epoxymelianol synthase CYP88A154</fullName>
        <ecNumber evidence="3">1.14.14.-</ecNumber>
    </recommendedName>
    <alternativeName>
        <fullName evidence="4">Cytochrome P450 family 88 subfamily A polypeptide 154</fullName>
        <shortName evidence="4">AaCYP88A154</shortName>
    </alternativeName>
</protein>
<sequence length="496" mass="57276">MLRNSDIKMDFNFLWLILAIFVGTYVVLFGFLRRVNDWYYVSRLGEKRHSLPPGEMGWPLLGNMLSFIRAFRTSDPDTFIYNLVDRYGRTGIYKSHLFWSPSIVVCTPETCKTVLMDNERFGRGNPESTKELLGKKTLGLSNEEHKRLRKLTTNPFRGDKALTMYVGYIEDIVIDLLDEWAGMNKHLVFLTEMRKLAFKVIGHIVFGTTSDHLLELMEKYYTDLLLGLRSPAINIPGFAFYRALKARKLLVKLLQDVLDERKKLSGIEQQKGKKGMIDLLIEAEDENGKKLEDDNIIDLLIINLLAGHESSAHASMWAVLYLYQHPEMLQKAKEEQEEIIKRRPSTQKGLTLEEIKQMEYLSKIIDETMRRTSLFIPIFREAKTDAKIQGYTVPKGWQVLVWTRGVHMDPEVYSNPKEFDPSRWDNHAPKPGSYIPFGGGPWICSGADLTKLEIYIFLHYFLLNYKLELLNPKCPVAYLPVPRPSDNCVAKVVKLK</sequence>
<gene>
    <name evidence="4" type="primary">CYP88A154</name>
</gene>
<dbReference type="EC" id="1.14.14.-" evidence="3"/>
<dbReference type="EMBL" id="ON942227">
    <property type="protein sequence ID" value="WET51926.1"/>
    <property type="molecule type" value="mRNA"/>
</dbReference>
<dbReference type="SMR" id="A0A9Y1LLN2"/>
<dbReference type="UniPathway" id="UPA00213"/>
<dbReference type="GO" id="GO:0005783">
    <property type="term" value="C:endoplasmic reticulum"/>
    <property type="evidence" value="ECO:0007669"/>
    <property type="project" value="TreeGrafter"/>
</dbReference>
<dbReference type="GO" id="GO:0016020">
    <property type="term" value="C:membrane"/>
    <property type="evidence" value="ECO:0007669"/>
    <property type="project" value="UniProtKB-SubCell"/>
</dbReference>
<dbReference type="GO" id="GO:0051777">
    <property type="term" value="F:ent-kaurenoic acid monooxygenase activity"/>
    <property type="evidence" value="ECO:0007669"/>
    <property type="project" value="TreeGrafter"/>
</dbReference>
<dbReference type="GO" id="GO:0020037">
    <property type="term" value="F:heme binding"/>
    <property type="evidence" value="ECO:0007669"/>
    <property type="project" value="InterPro"/>
</dbReference>
<dbReference type="GO" id="GO:0005506">
    <property type="term" value="F:iron ion binding"/>
    <property type="evidence" value="ECO:0007669"/>
    <property type="project" value="InterPro"/>
</dbReference>
<dbReference type="GO" id="GO:0016132">
    <property type="term" value="P:brassinosteroid biosynthetic process"/>
    <property type="evidence" value="ECO:0007669"/>
    <property type="project" value="TreeGrafter"/>
</dbReference>
<dbReference type="GO" id="GO:0010268">
    <property type="term" value="P:brassinosteroid homeostasis"/>
    <property type="evidence" value="ECO:0007669"/>
    <property type="project" value="TreeGrafter"/>
</dbReference>
<dbReference type="GO" id="GO:0016125">
    <property type="term" value="P:sterol metabolic process"/>
    <property type="evidence" value="ECO:0007669"/>
    <property type="project" value="TreeGrafter"/>
</dbReference>
<dbReference type="Gene3D" id="1.10.630.10">
    <property type="entry name" value="Cytochrome P450"/>
    <property type="match status" value="1"/>
</dbReference>
<dbReference type="InterPro" id="IPR001128">
    <property type="entry name" value="Cyt_P450"/>
</dbReference>
<dbReference type="InterPro" id="IPR002401">
    <property type="entry name" value="Cyt_P450_E_grp-I"/>
</dbReference>
<dbReference type="InterPro" id="IPR036396">
    <property type="entry name" value="Cyt_P450_sf"/>
</dbReference>
<dbReference type="PANTHER" id="PTHR24286">
    <property type="entry name" value="CYTOCHROME P450 26"/>
    <property type="match status" value="1"/>
</dbReference>
<dbReference type="PANTHER" id="PTHR24286:SF199">
    <property type="entry name" value="CYTOCHROME P450 88D6"/>
    <property type="match status" value="1"/>
</dbReference>
<dbReference type="Pfam" id="PF00067">
    <property type="entry name" value="p450"/>
    <property type="match status" value="1"/>
</dbReference>
<dbReference type="PRINTS" id="PR00463">
    <property type="entry name" value="EP450I"/>
</dbReference>
<dbReference type="PRINTS" id="PR00385">
    <property type="entry name" value="P450"/>
</dbReference>
<dbReference type="SUPFAM" id="SSF48264">
    <property type="entry name" value="Cytochrome P450"/>
    <property type="match status" value="1"/>
</dbReference>
<keyword id="KW-0349">Heme</keyword>
<keyword id="KW-0408">Iron</keyword>
<keyword id="KW-0472">Membrane</keyword>
<keyword id="KW-0479">Metal-binding</keyword>
<keyword id="KW-0503">Monooxygenase</keyword>
<keyword id="KW-0560">Oxidoreductase</keyword>
<keyword id="KW-0812">Transmembrane</keyword>
<keyword id="KW-1133">Transmembrane helix</keyword>
<feature type="chain" id="PRO_0000461368" description="7,8-epoxymelianol synthase CYP88A154">
    <location>
        <begin position="1"/>
        <end position="496"/>
    </location>
</feature>
<feature type="transmembrane region" description="Helical" evidence="2">
    <location>
        <begin position="11"/>
        <end position="31"/>
    </location>
</feature>
<feature type="binding site" description="axial binding residue" evidence="1">
    <location>
        <position position="444"/>
    </location>
    <ligand>
        <name>heme</name>
        <dbReference type="ChEBI" id="CHEBI:30413"/>
    </ligand>
    <ligandPart>
        <name>Fe</name>
        <dbReference type="ChEBI" id="CHEBI:18248"/>
    </ligandPart>
</feature>
<name>CA154_AILAL</name>
<proteinExistence type="evidence at protein level"/>
<comment type="function">
    <text evidence="3">Monooxygenase involved in the biosynthesis of glabretanes, limonoids and quassinoids triterpene natural products such as ailanthone, chaparrinone, glaucarubinone and amarolide, allelopathic degraded triterpene lactones inhibiting the growth of other plants, and possessing antimalarial, antifeedant, insecticidal, anti-inflammatory and anticancer activities (PubMed:36821810). Catalyzes the epoxidation of melianol to produce 7,8-epoxymelianol (PubMed:36821810).</text>
</comment>
<comment type="catalytic activity">
    <reaction evidence="3">
        <text>melianol + reduced [NADPH--hemoprotein reductase] + O2 = 7,8-epoxymelianol + oxidized [NADPH--hemoprotein reductase] + H2O + H(+)</text>
        <dbReference type="Rhea" id="RHEA:80291"/>
        <dbReference type="Rhea" id="RHEA-COMP:11964"/>
        <dbReference type="Rhea" id="RHEA-COMP:11965"/>
        <dbReference type="ChEBI" id="CHEBI:15377"/>
        <dbReference type="ChEBI" id="CHEBI:15378"/>
        <dbReference type="ChEBI" id="CHEBI:15379"/>
        <dbReference type="ChEBI" id="CHEBI:57618"/>
        <dbReference type="ChEBI" id="CHEBI:58210"/>
        <dbReference type="ChEBI" id="CHEBI:231451"/>
        <dbReference type="ChEBI" id="CHEBI:231452"/>
    </reaction>
    <physiologicalReaction direction="left-to-right" evidence="3">
        <dbReference type="Rhea" id="RHEA:80292"/>
    </physiologicalReaction>
</comment>
<comment type="cofactor">
    <cofactor evidence="1">
        <name>heme</name>
        <dbReference type="ChEBI" id="CHEBI:30413"/>
    </cofactor>
</comment>
<comment type="pathway">
    <text evidence="3">Secondary metabolite biosynthesis; terpenoid biosynthesis.</text>
</comment>
<comment type="subcellular location">
    <subcellularLocation>
        <location evidence="2">Membrane</location>
        <topology evidence="2">Single-pass membrane protein</topology>
    </subcellularLocation>
</comment>
<comment type="similarity">
    <text evidence="5">Belongs to the cytochrome P450 family.</text>
</comment>